<accession>Q87YY5</accession>
<organism>
    <name type="scientific">Pseudomonas syringae pv. tomato (strain ATCC BAA-871 / DC3000)</name>
    <dbReference type="NCBI Taxonomy" id="223283"/>
    <lineage>
        <taxon>Bacteria</taxon>
        <taxon>Pseudomonadati</taxon>
        <taxon>Pseudomonadota</taxon>
        <taxon>Gammaproteobacteria</taxon>
        <taxon>Pseudomonadales</taxon>
        <taxon>Pseudomonadaceae</taxon>
        <taxon>Pseudomonas</taxon>
    </lineage>
</organism>
<evidence type="ECO:0000255" key="1">
    <source>
        <dbReference type="HAMAP-Rule" id="MF_00509"/>
    </source>
</evidence>
<evidence type="ECO:0000256" key="2">
    <source>
        <dbReference type="SAM" id="MobiDB-lite"/>
    </source>
</evidence>
<dbReference type="EMBL" id="AE016853">
    <property type="protein sequence ID" value="AAO57126.1"/>
    <property type="molecule type" value="Genomic_DNA"/>
</dbReference>
<dbReference type="RefSeq" id="NP_793431.1">
    <property type="nucleotide sequence ID" value="NC_004578.1"/>
</dbReference>
<dbReference type="RefSeq" id="WP_003376124.1">
    <property type="nucleotide sequence ID" value="NC_004578.1"/>
</dbReference>
<dbReference type="SMR" id="Q87YY5"/>
<dbReference type="STRING" id="223283.PSPTO_3657"/>
<dbReference type="GeneID" id="1185322"/>
<dbReference type="KEGG" id="pst:PSPTO_3657"/>
<dbReference type="PATRIC" id="fig|223283.9.peg.3747"/>
<dbReference type="eggNOG" id="COG3115">
    <property type="taxonomic scope" value="Bacteria"/>
</dbReference>
<dbReference type="HOGENOM" id="CLU_030174_0_1_6"/>
<dbReference type="OrthoDB" id="7054914at2"/>
<dbReference type="PhylomeDB" id="Q87YY5"/>
<dbReference type="Proteomes" id="UP000002515">
    <property type="component" value="Chromosome"/>
</dbReference>
<dbReference type="GO" id="GO:0032153">
    <property type="term" value="C:cell division site"/>
    <property type="evidence" value="ECO:0007669"/>
    <property type="project" value="UniProtKB-UniRule"/>
</dbReference>
<dbReference type="GO" id="GO:0005886">
    <property type="term" value="C:plasma membrane"/>
    <property type="evidence" value="ECO:0007669"/>
    <property type="project" value="UniProtKB-SubCell"/>
</dbReference>
<dbReference type="GO" id="GO:0000917">
    <property type="term" value="P:division septum assembly"/>
    <property type="evidence" value="ECO:0007669"/>
    <property type="project" value="TreeGrafter"/>
</dbReference>
<dbReference type="GO" id="GO:0043093">
    <property type="term" value="P:FtsZ-dependent cytokinesis"/>
    <property type="evidence" value="ECO:0007669"/>
    <property type="project" value="UniProtKB-UniRule"/>
</dbReference>
<dbReference type="Gene3D" id="3.30.1400.10">
    <property type="entry name" value="ZipA, C-terminal FtsZ-binding domain"/>
    <property type="match status" value="1"/>
</dbReference>
<dbReference type="HAMAP" id="MF_00509">
    <property type="entry name" value="ZipA"/>
    <property type="match status" value="1"/>
</dbReference>
<dbReference type="InterPro" id="IPR011919">
    <property type="entry name" value="Cell_div_ZipA"/>
</dbReference>
<dbReference type="InterPro" id="IPR007449">
    <property type="entry name" value="ZipA_FtsZ-bd_C"/>
</dbReference>
<dbReference type="InterPro" id="IPR036765">
    <property type="entry name" value="ZipA_FtsZ-bd_C_sf"/>
</dbReference>
<dbReference type="NCBIfam" id="TIGR02205">
    <property type="entry name" value="septum_zipA"/>
    <property type="match status" value="1"/>
</dbReference>
<dbReference type="PANTHER" id="PTHR38685">
    <property type="entry name" value="CELL DIVISION PROTEIN ZIPA"/>
    <property type="match status" value="1"/>
</dbReference>
<dbReference type="PANTHER" id="PTHR38685:SF1">
    <property type="entry name" value="CELL DIVISION PROTEIN ZIPA"/>
    <property type="match status" value="1"/>
</dbReference>
<dbReference type="Pfam" id="PF04354">
    <property type="entry name" value="ZipA_C"/>
    <property type="match status" value="1"/>
</dbReference>
<dbReference type="SMART" id="SM00771">
    <property type="entry name" value="ZipA_C"/>
    <property type="match status" value="1"/>
</dbReference>
<dbReference type="SUPFAM" id="SSF64383">
    <property type="entry name" value="Cell-division protein ZipA, C-terminal domain"/>
    <property type="match status" value="1"/>
</dbReference>
<sequence>MEIGLREWLIVIGIIVIAGILFDGWRRMRGGKGKLKFRLDRSFSNLPDEEETTSAEVLGPPRVLDTHKEPQLDEHDLPSMSANPRDNKRGAGSEKRGDKKRKDEPQQGDLNLDLDGPSLFTARDDDFPDDKPAQRITEDKDLPPVEEVLVISVISRNEGGFKGPALLQNILESGLRFGEMDIFHRHESMAGNGEVLFSMANAVKPGVFDLDDIDHFSTRAVSFFLGLPGPRRPKQAFDVMVAAARKLAHELDGELKDDQRSVMTAQTIEHYRQRIVEFERRALTQRRG</sequence>
<gene>
    <name evidence="1" type="primary">zipA</name>
    <name type="ordered locus">PSPTO_3657</name>
</gene>
<reference key="1">
    <citation type="journal article" date="2003" name="Proc. Natl. Acad. Sci. U.S.A.">
        <title>The complete genome sequence of the Arabidopsis and tomato pathogen Pseudomonas syringae pv. tomato DC3000.</title>
        <authorList>
            <person name="Buell C.R."/>
            <person name="Joardar V."/>
            <person name="Lindeberg M."/>
            <person name="Selengut J."/>
            <person name="Paulsen I.T."/>
            <person name="Gwinn M.L."/>
            <person name="Dodson R.J."/>
            <person name="DeBoy R.T."/>
            <person name="Durkin A.S."/>
            <person name="Kolonay J.F."/>
            <person name="Madupu R."/>
            <person name="Daugherty S.C."/>
            <person name="Brinkac L.M."/>
            <person name="Beanan M.J."/>
            <person name="Haft D.H."/>
            <person name="Nelson W.C."/>
            <person name="Davidsen T.M."/>
            <person name="Zafar N."/>
            <person name="Zhou L."/>
            <person name="Liu J."/>
            <person name="Yuan Q."/>
            <person name="Khouri H.M."/>
            <person name="Fedorova N.B."/>
            <person name="Tran B."/>
            <person name="Russell D."/>
            <person name="Berry K.J."/>
            <person name="Utterback T.R."/>
            <person name="Van Aken S.E."/>
            <person name="Feldblyum T.V."/>
            <person name="D'Ascenzo M."/>
            <person name="Deng W.-L."/>
            <person name="Ramos A.R."/>
            <person name="Alfano J.R."/>
            <person name="Cartinhour S."/>
            <person name="Chatterjee A.K."/>
            <person name="Delaney T.P."/>
            <person name="Lazarowitz S.G."/>
            <person name="Martin G.B."/>
            <person name="Schneider D.J."/>
            <person name="Tang X."/>
            <person name="Bender C.L."/>
            <person name="White O."/>
            <person name="Fraser C.M."/>
            <person name="Collmer A."/>
        </authorList>
    </citation>
    <scope>NUCLEOTIDE SEQUENCE [LARGE SCALE GENOMIC DNA]</scope>
    <source>
        <strain>ATCC BAA-871 / DC3000</strain>
    </source>
</reference>
<name>ZIPA_PSESM</name>
<comment type="function">
    <text evidence="1">Essential cell division protein that stabilizes the FtsZ protofilaments by cross-linking them and that serves as a cytoplasmic membrane anchor for the Z ring. Also required for the recruitment to the septal ring of downstream cell division proteins.</text>
</comment>
<comment type="subunit">
    <text evidence="1">Interacts with FtsZ via their C-terminal domains.</text>
</comment>
<comment type="subcellular location">
    <subcellularLocation>
        <location evidence="1">Cell inner membrane</location>
        <topology evidence="1">Single-pass type I membrane protein</topology>
    </subcellularLocation>
    <text evidence="1">Localizes to the Z ring in an FtsZ-dependent manner.</text>
</comment>
<comment type="similarity">
    <text evidence="1">Belongs to the ZipA family.</text>
</comment>
<protein>
    <recommendedName>
        <fullName evidence="1">Cell division protein ZipA</fullName>
    </recommendedName>
</protein>
<proteinExistence type="inferred from homology"/>
<keyword id="KW-0131">Cell cycle</keyword>
<keyword id="KW-0132">Cell division</keyword>
<keyword id="KW-0997">Cell inner membrane</keyword>
<keyword id="KW-1003">Cell membrane</keyword>
<keyword id="KW-0472">Membrane</keyword>
<keyword id="KW-1185">Reference proteome</keyword>
<keyword id="KW-0812">Transmembrane</keyword>
<keyword id="KW-1133">Transmembrane helix</keyword>
<feature type="chain" id="PRO_0000214533" description="Cell division protein ZipA">
    <location>
        <begin position="1"/>
        <end position="288"/>
    </location>
</feature>
<feature type="topological domain" description="Periplasmic" evidence="1">
    <location>
        <position position="1"/>
    </location>
</feature>
<feature type="transmembrane region" description="Helical" evidence="1">
    <location>
        <begin position="2"/>
        <end position="22"/>
    </location>
</feature>
<feature type="topological domain" description="Cytoplasmic" evidence="1">
    <location>
        <begin position="23"/>
        <end position="288"/>
    </location>
</feature>
<feature type="region of interest" description="Disordered" evidence="2">
    <location>
        <begin position="48"/>
        <end position="138"/>
    </location>
</feature>
<feature type="compositionally biased region" description="Basic and acidic residues" evidence="2">
    <location>
        <begin position="64"/>
        <end position="77"/>
    </location>
</feature>
<feature type="compositionally biased region" description="Basic and acidic residues" evidence="2">
    <location>
        <begin position="85"/>
        <end position="105"/>
    </location>
</feature>
<feature type="compositionally biased region" description="Basic and acidic residues" evidence="2">
    <location>
        <begin position="122"/>
        <end position="138"/>
    </location>
</feature>